<proteinExistence type="inferred from homology"/>
<sequence length="88" mass="10330">MDGFDKTMKFSIQDEKQSVHVNDVLLTVYDALQEKGYNPINQIVGYLLSGDPAYIPRHKDARSIIRKLERDELIEELVKSYLKHHREE</sequence>
<name>Y4615_BACAN</name>
<gene>
    <name type="ordered locus">BA_4615</name>
    <name type="ordered locus">GBAA_4615</name>
    <name type="ordered locus">BAS4283</name>
</gene>
<reference key="1">
    <citation type="journal article" date="2003" name="Nature">
        <title>The genome sequence of Bacillus anthracis Ames and comparison to closely related bacteria.</title>
        <authorList>
            <person name="Read T.D."/>
            <person name="Peterson S.N."/>
            <person name="Tourasse N.J."/>
            <person name="Baillie L.W."/>
            <person name="Paulsen I.T."/>
            <person name="Nelson K.E."/>
            <person name="Tettelin H."/>
            <person name="Fouts D.E."/>
            <person name="Eisen J.A."/>
            <person name="Gill S.R."/>
            <person name="Holtzapple E.K."/>
            <person name="Okstad O.A."/>
            <person name="Helgason E."/>
            <person name="Rilstone J."/>
            <person name="Wu M."/>
            <person name="Kolonay J.F."/>
            <person name="Beanan M.J."/>
            <person name="Dodson R.J."/>
            <person name="Brinkac L.M."/>
            <person name="Gwinn M.L."/>
            <person name="DeBoy R.T."/>
            <person name="Madpu R."/>
            <person name="Daugherty S.C."/>
            <person name="Durkin A.S."/>
            <person name="Haft D.H."/>
            <person name="Nelson W.C."/>
            <person name="Peterson J.D."/>
            <person name="Pop M."/>
            <person name="Khouri H.M."/>
            <person name="Radune D."/>
            <person name="Benton J.L."/>
            <person name="Mahamoud Y."/>
            <person name="Jiang L."/>
            <person name="Hance I.R."/>
            <person name="Weidman J.F."/>
            <person name="Berry K.J."/>
            <person name="Plaut R.D."/>
            <person name="Wolf A.M."/>
            <person name="Watkins K.L."/>
            <person name="Nierman W.C."/>
            <person name="Hazen A."/>
            <person name="Cline R.T."/>
            <person name="Redmond C."/>
            <person name="Thwaite J.E."/>
            <person name="White O."/>
            <person name="Salzberg S.L."/>
            <person name="Thomason B."/>
            <person name="Friedlander A.M."/>
            <person name="Koehler T.M."/>
            <person name="Hanna P.C."/>
            <person name="Kolstoe A.-B."/>
            <person name="Fraser C.M."/>
        </authorList>
    </citation>
    <scope>NUCLEOTIDE SEQUENCE [LARGE SCALE GENOMIC DNA]</scope>
    <source>
        <strain>Ames / isolate Porton</strain>
    </source>
</reference>
<reference key="2">
    <citation type="journal article" date="2009" name="J. Bacteriol.">
        <title>The complete genome sequence of Bacillus anthracis Ames 'Ancestor'.</title>
        <authorList>
            <person name="Ravel J."/>
            <person name="Jiang L."/>
            <person name="Stanley S.T."/>
            <person name="Wilson M.R."/>
            <person name="Decker R.S."/>
            <person name="Read T.D."/>
            <person name="Worsham P."/>
            <person name="Keim P.S."/>
            <person name="Salzberg S.L."/>
            <person name="Fraser-Liggett C.M."/>
            <person name="Rasko D.A."/>
        </authorList>
    </citation>
    <scope>NUCLEOTIDE SEQUENCE [LARGE SCALE GENOMIC DNA]</scope>
    <source>
        <strain>Ames ancestor</strain>
    </source>
</reference>
<reference key="3">
    <citation type="submission" date="2004-01" db="EMBL/GenBank/DDBJ databases">
        <title>Complete genome sequence of Bacillus anthracis Sterne.</title>
        <authorList>
            <person name="Brettin T.S."/>
            <person name="Bruce D."/>
            <person name="Challacombe J.F."/>
            <person name="Gilna P."/>
            <person name="Han C."/>
            <person name="Hill K."/>
            <person name="Hitchcock P."/>
            <person name="Jackson P."/>
            <person name="Keim P."/>
            <person name="Longmire J."/>
            <person name="Lucas S."/>
            <person name="Okinaka R."/>
            <person name="Richardson P."/>
            <person name="Rubin E."/>
            <person name="Tice H."/>
        </authorList>
    </citation>
    <scope>NUCLEOTIDE SEQUENCE [LARGE SCALE GENOMIC DNA]</scope>
    <source>
        <strain>Sterne</strain>
    </source>
</reference>
<organism>
    <name type="scientific">Bacillus anthracis</name>
    <dbReference type="NCBI Taxonomy" id="1392"/>
    <lineage>
        <taxon>Bacteria</taxon>
        <taxon>Bacillati</taxon>
        <taxon>Bacillota</taxon>
        <taxon>Bacilli</taxon>
        <taxon>Bacillales</taxon>
        <taxon>Bacillaceae</taxon>
        <taxon>Bacillus</taxon>
        <taxon>Bacillus cereus group</taxon>
    </lineage>
</organism>
<accession>Q81LK1</accession>
<accession>Q6HT07</accession>
<accession>Q6KIY9</accession>
<protein>
    <recommendedName>
        <fullName evidence="1">UPF0297 protein BA_4615/GBAA_4615/BAS4283</fullName>
    </recommendedName>
</protein>
<dbReference type="EMBL" id="AE016879">
    <property type="protein sequence ID" value="AAP28320.1"/>
    <property type="molecule type" value="Genomic_DNA"/>
</dbReference>
<dbReference type="EMBL" id="AE017334">
    <property type="protein sequence ID" value="AAT35431.1"/>
    <property type="molecule type" value="Genomic_DNA"/>
</dbReference>
<dbReference type="EMBL" id="AE017225">
    <property type="protein sequence ID" value="AAT56582.1"/>
    <property type="molecule type" value="Genomic_DNA"/>
</dbReference>
<dbReference type="RefSeq" id="NP_846834.1">
    <property type="nucleotide sequence ID" value="NC_003997.3"/>
</dbReference>
<dbReference type="RefSeq" id="WP_000348590.1">
    <property type="nucleotide sequence ID" value="NZ_WXXJ01000027.1"/>
</dbReference>
<dbReference type="RefSeq" id="YP_030531.1">
    <property type="nucleotide sequence ID" value="NC_005945.1"/>
</dbReference>
<dbReference type="SMR" id="Q81LK1"/>
<dbReference type="STRING" id="261594.GBAA_4615"/>
<dbReference type="DNASU" id="1088741"/>
<dbReference type="KEGG" id="ban:BA_4615"/>
<dbReference type="KEGG" id="bar:GBAA_4615"/>
<dbReference type="KEGG" id="bat:BAS4283"/>
<dbReference type="PATRIC" id="fig|198094.11.peg.4582"/>
<dbReference type="eggNOG" id="COG4472">
    <property type="taxonomic scope" value="Bacteria"/>
</dbReference>
<dbReference type="HOGENOM" id="CLU_162466_0_0_9"/>
<dbReference type="OMA" id="GYHPINQ"/>
<dbReference type="OrthoDB" id="9796303at2"/>
<dbReference type="Proteomes" id="UP000000427">
    <property type="component" value="Chromosome"/>
</dbReference>
<dbReference type="Proteomes" id="UP000000594">
    <property type="component" value="Chromosome"/>
</dbReference>
<dbReference type="HAMAP" id="MF_01507">
    <property type="entry name" value="UPF0297"/>
    <property type="match status" value="1"/>
</dbReference>
<dbReference type="InterPro" id="IPR009309">
    <property type="entry name" value="IreB"/>
</dbReference>
<dbReference type="NCBIfam" id="NF003997">
    <property type="entry name" value="PRK05473.1"/>
    <property type="match status" value="1"/>
</dbReference>
<dbReference type="PANTHER" id="PTHR40067">
    <property type="entry name" value="UPF0297 PROTEIN YRZL"/>
    <property type="match status" value="1"/>
</dbReference>
<dbReference type="PANTHER" id="PTHR40067:SF1">
    <property type="entry name" value="UPF0297 PROTEIN YRZL"/>
    <property type="match status" value="1"/>
</dbReference>
<dbReference type="Pfam" id="PF06135">
    <property type="entry name" value="IreB"/>
    <property type="match status" value="1"/>
</dbReference>
<dbReference type="PIRSF" id="PIRSF037258">
    <property type="entry name" value="DUF965_bac"/>
    <property type="match status" value="1"/>
</dbReference>
<evidence type="ECO:0000255" key="1">
    <source>
        <dbReference type="HAMAP-Rule" id="MF_01507"/>
    </source>
</evidence>
<keyword id="KW-1185">Reference proteome</keyword>
<feature type="chain" id="PRO_0000216956" description="UPF0297 protein BA_4615/GBAA_4615/BAS4283">
    <location>
        <begin position="1"/>
        <end position="88"/>
    </location>
</feature>
<comment type="similarity">
    <text evidence="1">Belongs to the UPF0297 family.</text>
</comment>